<gene>
    <name evidence="1" type="primary">pyrE</name>
    <name type="ordered locus">Maqu_0546</name>
</gene>
<proteinExistence type="inferred from homology"/>
<keyword id="KW-0328">Glycosyltransferase</keyword>
<keyword id="KW-0460">Magnesium</keyword>
<keyword id="KW-0665">Pyrimidine biosynthesis</keyword>
<keyword id="KW-0808">Transferase</keyword>
<evidence type="ECO:0000255" key="1">
    <source>
        <dbReference type="HAMAP-Rule" id="MF_01208"/>
    </source>
</evidence>
<protein>
    <recommendedName>
        <fullName evidence="1">Orotate phosphoribosyltransferase</fullName>
        <shortName evidence="1">OPRT</shortName>
        <shortName evidence="1">OPRTase</shortName>
        <ecNumber evidence="1">2.4.2.10</ecNumber>
    </recommendedName>
</protein>
<dbReference type="EC" id="2.4.2.10" evidence="1"/>
<dbReference type="EMBL" id="CP000514">
    <property type="protein sequence ID" value="ABM17647.1"/>
    <property type="molecule type" value="Genomic_DNA"/>
</dbReference>
<dbReference type="RefSeq" id="WP_011784091.1">
    <property type="nucleotide sequence ID" value="NC_008740.1"/>
</dbReference>
<dbReference type="SMR" id="A1TY28"/>
<dbReference type="STRING" id="351348.Maqu_0546"/>
<dbReference type="GeneID" id="31819985"/>
<dbReference type="KEGG" id="maq:Maqu_0546"/>
<dbReference type="eggNOG" id="COG0461">
    <property type="taxonomic scope" value="Bacteria"/>
</dbReference>
<dbReference type="HOGENOM" id="CLU_074878_0_1_6"/>
<dbReference type="OrthoDB" id="9779060at2"/>
<dbReference type="UniPathway" id="UPA00070">
    <property type="reaction ID" value="UER00119"/>
</dbReference>
<dbReference type="Proteomes" id="UP000000998">
    <property type="component" value="Chromosome"/>
</dbReference>
<dbReference type="GO" id="GO:0005737">
    <property type="term" value="C:cytoplasm"/>
    <property type="evidence" value="ECO:0007669"/>
    <property type="project" value="TreeGrafter"/>
</dbReference>
<dbReference type="GO" id="GO:0000287">
    <property type="term" value="F:magnesium ion binding"/>
    <property type="evidence" value="ECO:0007669"/>
    <property type="project" value="UniProtKB-UniRule"/>
</dbReference>
<dbReference type="GO" id="GO:0004588">
    <property type="term" value="F:orotate phosphoribosyltransferase activity"/>
    <property type="evidence" value="ECO:0007669"/>
    <property type="project" value="UniProtKB-UniRule"/>
</dbReference>
<dbReference type="GO" id="GO:0006207">
    <property type="term" value="P:'de novo' pyrimidine nucleobase biosynthetic process"/>
    <property type="evidence" value="ECO:0007669"/>
    <property type="project" value="TreeGrafter"/>
</dbReference>
<dbReference type="GO" id="GO:0044205">
    <property type="term" value="P:'de novo' UMP biosynthetic process"/>
    <property type="evidence" value="ECO:0007669"/>
    <property type="project" value="UniProtKB-UniRule"/>
</dbReference>
<dbReference type="GO" id="GO:0046132">
    <property type="term" value="P:pyrimidine ribonucleoside biosynthetic process"/>
    <property type="evidence" value="ECO:0007669"/>
    <property type="project" value="TreeGrafter"/>
</dbReference>
<dbReference type="CDD" id="cd06223">
    <property type="entry name" value="PRTases_typeI"/>
    <property type="match status" value="1"/>
</dbReference>
<dbReference type="FunFam" id="3.40.50.2020:FF:000008">
    <property type="entry name" value="Orotate phosphoribosyltransferase"/>
    <property type="match status" value="1"/>
</dbReference>
<dbReference type="Gene3D" id="3.40.50.2020">
    <property type="match status" value="1"/>
</dbReference>
<dbReference type="HAMAP" id="MF_01208">
    <property type="entry name" value="PyrE"/>
    <property type="match status" value="1"/>
</dbReference>
<dbReference type="InterPro" id="IPR023031">
    <property type="entry name" value="OPRT"/>
</dbReference>
<dbReference type="InterPro" id="IPR004467">
    <property type="entry name" value="Or_phspho_trans_dom"/>
</dbReference>
<dbReference type="InterPro" id="IPR000836">
    <property type="entry name" value="PRibTrfase_dom"/>
</dbReference>
<dbReference type="InterPro" id="IPR029057">
    <property type="entry name" value="PRTase-like"/>
</dbReference>
<dbReference type="NCBIfam" id="TIGR00336">
    <property type="entry name" value="pyrE"/>
    <property type="match status" value="1"/>
</dbReference>
<dbReference type="PANTHER" id="PTHR46683">
    <property type="entry name" value="OROTATE PHOSPHORIBOSYLTRANSFERASE 1-RELATED"/>
    <property type="match status" value="1"/>
</dbReference>
<dbReference type="PANTHER" id="PTHR46683:SF1">
    <property type="entry name" value="OROTATE PHOSPHORIBOSYLTRANSFERASE 1-RELATED"/>
    <property type="match status" value="1"/>
</dbReference>
<dbReference type="Pfam" id="PF00156">
    <property type="entry name" value="Pribosyltran"/>
    <property type="match status" value="1"/>
</dbReference>
<dbReference type="SUPFAM" id="SSF53271">
    <property type="entry name" value="PRTase-like"/>
    <property type="match status" value="1"/>
</dbReference>
<dbReference type="PROSITE" id="PS00103">
    <property type="entry name" value="PUR_PYR_PR_TRANSFER"/>
    <property type="match status" value="1"/>
</dbReference>
<feature type="chain" id="PRO_1000066253" description="Orotate phosphoribosyltransferase">
    <location>
        <begin position="1"/>
        <end position="212"/>
    </location>
</feature>
<feature type="binding site" description="in other chain" evidence="1">
    <location>
        <position position="26"/>
    </location>
    <ligand>
        <name>5-phospho-alpha-D-ribose 1-diphosphate</name>
        <dbReference type="ChEBI" id="CHEBI:58017"/>
        <note>ligand shared between dimeric partners</note>
    </ligand>
</feature>
<feature type="binding site" evidence="1">
    <location>
        <begin position="34"/>
        <end position="35"/>
    </location>
    <ligand>
        <name>orotate</name>
        <dbReference type="ChEBI" id="CHEBI:30839"/>
    </ligand>
</feature>
<feature type="binding site" description="in other chain" evidence="1">
    <location>
        <begin position="72"/>
        <end position="73"/>
    </location>
    <ligand>
        <name>5-phospho-alpha-D-ribose 1-diphosphate</name>
        <dbReference type="ChEBI" id="CHEBI:58017"/>
        <note>ligand shared between dimeric partners</note>
    </ligand>
</feature>
<feature type="binding site" evidence="1">
    <location>
        <position position="98"/>
    </location>
    <ligand>
        <name>5-phospho-alpha-D-ribose 1-diphosphate</name>
        <dbReference type="ChEBI" id="CHEBI:58017"/>
        <note>ligand shared between dimeric partners</note>
    </ligand>
</feature>
<feature type="binding site" description="in other chain" evidence="1">
    <location>
        <position position="99"/>
    </location>
    <ligand>
        <name>5-phospho-alpha-D-ribose 1-diphosphate</name>
        <dbReference type="ChEBI" id="CHEBI:58017"/>
        <note>ligand shared between dimeric partners</note>
    </ligand>
</feature>
<feature type="binding site" evidence="1">
    <location>
        <position position="102"/>
    </location>
    <ligand>
        <name>5-phospho-alpha-D-ribose 1-diphosphate</name>
        <dbReference type="ChEBI" id="CHEBI:58017"/>
        <note>ligand shared between dimeric partners</note>
    </ligand>
</feature>
<feature type="binding site" evidence="1">
    <location>
        <position position="104"/>
    </location>
    <ligand>
        <name>5-phospho-alpha-D-ribose 1-diphosphate</name>
        <dbReference type="ChEBI" id="CHEBI:58017"/>
        <note>ligand shared between dimeric partners</note>
    </ligand>
</feature>
<feature type="binding site" description="in other chain" evidence="1">
    <location>
        <begin position="123"/>
        <end position="131"/>
    </location>
    <ligand>
        <name>5-phospho-alpha-D-ribose 1-diphosphate</name>
        <dbReference type="ChEBI" id="CHEBI:58017"/>
        <note>ligand shared between dimeric partners</note>
    </ligand>
</feature>
<feature type="binding site" evidence="1">
    <location>
        <position position="127"/>
    </location>
    <ligand>
        <name>orotate</name>
        <dbReference type="ChEBI" id="CHEBI:30839"/>
    </ligand>
</feature>
<feature type="binding site" evidence="1">
    <location>
        <position position="155"/>
    </location>
    <ligand>
        <name>orotate</name>
        <dbReference type="ChEBI" id="CHEBI:30839"/>
    </ligand>
</feature>
<sequence>MHDYQQKFIEFAIQRNVLRFGEFTLKSGRTSPYFFNAGLFNTGNDLLELSKAYAAAIARSGLDYDIIFGPAYKGIPLATVTAMALATDGNSKPFAFNRKEKKDHGEGGNIVGAPLQGKVLIVDDVITAGTAIRESIDIIRAAGAEPAGVLIALDRQEKGNGELSAIQEVEKEFGIPVVSIIRLEQVLDYLKSNPEFAGHAENVASYRDRYGV</sequence>
<organism>
    <name type="scientific">Marinobacter nauticus (strain ATCC 700491 / DSM 11845 / VT8)</name>
    <name type="common">Marinobacter aquaeolei</name>
    <dbReference type="NCBI Taxonomy" id="351348"/>
    <lineage>
        <taxon>Bacteria</taxon>
        <taxon>Pseudomonadati</taxon>
        <taxon>Pseudomonadota</taxon>
        <taxon>Gammaproteobacteria</taxon>
        <taxon>Pseudomonadales</taxon>
        <taxon>Marinobacteraceae</taxon>
        <taxon>Marinobacter</taxon>
    </lineage>
</organism>
<name>PYRE_MARN8</name>
<comment type="function">
    <text evidence="1">Catalyzes the transfer of a ribosyl phosphate group from 5-phosphoribose 1-diphosphate to orotate, leading to the formation of orotidine monophosphate (OMP).</text>
</comment>
<comment type="catalytic activity">
    <reaction evidence="1">
        <text>orotidine 5'-phosphate + diphosphate = orotate + 5-phospho-alpha-D-ribose 1-diphosphate</text>
        <dbReference type="Rhea" id="RHEA:10380"/>
        <dbReference type="ChEBI" id="CHEBI:30839"/>
        <dbReference type="ChEBI" id="CHEBI:33019"/>
        <dbReference type="ChEBI" id="CHEBI:57538"/>
        <dbReference type="ChEBI" id="CHEBI:58017"/>
        <dbReference type="EC" id="2.4.2.10"/>
    </reaction>
</comment>
<comment type="cofactor">
    <cofactor evidence="1">
        <name>Mg(2+)</name>
        <dbReference type="ChEBI" id="CHEBI:18420"/>
    </cofactor>
</comment>
<comment type="pathway">
    <text evidence="1">Pyrimidine metabolism; UMP biosynthesis via de novo pathway; UMP from orotate: step 1/2.</text>
</comment>
<comment type="subunit">
    <text evidence="1">Homodimer.</text>
</comment>
<comment type="similarity">
    <text evidence="1">Belongs to the purine/pyrimidine phosphoribosyltransferase family. PyrE subfamily.</text>
</comment>
<reference key="1">
    <citation type="journal article" date="2011" name="Appl. Environ. Microbiol.">
        <title>Genomic potential of Marinobacter aquaeolei, a biogeochemical 'opportunitroph'.</title>
        <authorList>
            <person name="Singer E."/>
            <person name="Webb E.A."/>
            <person name="Nelson W.C."/>
            <person name="Heidelberg J.F."/>
            <person name="Ivanova N."/>
            <person name="Pati A."/>
            <person name="Edwards K.J."/>
        </authorList>
    </citation>
    <scope>NUCLEOTIDE SEQUENCE [LARGE SCALE GENOMIC DNA]</scope>
    <source>
        <strain>ATCC 700491 / DSM 11845 / VT8</strain>
    </source>
</reference>
<accession>A1TY28</accession>